<dbReference type="EC" id="2.7.7.6" evidence="1"/>
<dbReference type="EMBL" id="AP009339">
    <property type="protein sequence ID" value="BAF64924.1"/>
    <property type="molecule type" value="Genomic_DNA"/>
</dbReference>
<dbReference type="RefSeq" id="YP_001312183.1">
    <property type="nucleotide sequence ID" value="NC_009618.1"/>
</dbReference>
<dbReference type="SMR" id="A6H5F8"/>
<dbReference type="GeneID" id="5309621"/>
<dbReference type="GO" id="GO:0009507">
    <property type="term" value="C:chloroplast"/>
    <property type="evidence" value="ECO:0007669"/>
    <property type="project" value="UniProtKB-SubCell"/>
</dbReference>
<dbReference type="GO" id="GO:0000428">
    <property type="term" value="C:DNA-directed RNA polymerase complex"/>
    <property type="evidence" value="ECO:0007669"/>
    <property type="project" value="UniProtKB-KW"/>
</dbReference>
<dbReference type="GO" id="GO:0005739">
    <property type="term" value="C:mitochondrion"/>
    <property type="evidence" value="ECO:0007669"/>
    <property type="project" value="GOC"/>
</dbReference>
<dbReference type="GO" id="GO:0003677">
    <property type="term" value="F:DNA binding"/>
    <property type="evidence" value="ECO:0007669"/>
    <property type="project" value="UniProtKB-UniRule"/>
</dbReference>
<dbReference type="GO" id="GO:0003899">
    <property type="term" value="F:DNA-directed RNA polymerase activity"/>
    <property type="evidence" value="ECO:0007669"/>
    <property type="project" value="UniProtKB-UniRule"/>
</dbReference>
<dbReference type="GO" id="GO:0000287">
    <property type="term" value="F:magnesium ion binding"/>
    <property type="evidence" value="ECO:0007669"/>
    <property type="project" value="UniProtKB-UniRule"/>
</dbReference>
<dbReference type="GO" id="GO:0008270">
    <property type="term" value="F:zinc ion binding"/>
    <property type="evidence" value="ECO:0007669"/>
    <property type="project" value="UniProtKB-UniRule"/>
</dbReference>
<dbReference type="GO" id="GO:0006351">
    <property type="term" value="P:DNA-templated transcription"/>
    <property type="evidence" value="ECO:0007669"/>
    <property type="project" value="UniProtKB-UniRule"/>
</dbReference>
<dbReference type="Gene3D" id="1.10.40.90">
    <property type="match status" value="1"/>
</dbReference>
<dbReference type="Gene3D" id="2.40.40.20">
    <property type="match status" value="1"/>
</dbReference>
<dbReference type="Gene3D" id="4.10.860.120">
    <property type="entry name" value="RNA polymerase II, clamp domain"/>
    <property type="match status" value="1"/>
</dbReference>
<dbReference type="Gene3D" id="1.10.274.100">
    <property type="entry name" value="RNA polymerase Rpb1, domain 3"/>
    <property type="match status" value="1"/>
</dbReference>
<dbReference type="HAMAP" id="MF_01323">
    <property type="entry name" value="RNApol_bact_RpoC1"/>
    <property type="match status" value="1"/>
</dbReference>
<dbReference type="InterPro" id="IPR045867">
    <property type="entry name" value="DNA-dir_RpoC_beta_prime"/>
</dbReference>
<dbReference type="InterPro" id="IPR000722">
    <property type="entry name" value="RNA_pol_asu"/>
</dbReference>
<dbReference type="InterPro" id="IPR006592">
    <property type="entry name" value="RNA_pol_N"/>
</dbReference>
<dbReference type="InterPro" id="IPR007080">
    <property type="entry name" value="RNA_pol_Rpb1_1"/>
</dbReference>
<dbReference type="InterPro" id="IPR042102">
    <property type="entry name" value="RNA_pol_Rpb1_3_sf"/>
</dbReference>
<dbReference type="InterPro" id="IPR044893">
    <property type="entry name" value="RNA_pol_Rpb1_clamp_domain"/>
</dbReference>
<dbReference type="InterPro" id="IPR034678">
    <property type="entry name" value="RNApol_RpoC1"/>
</dbReference>
<dbReference type="PANTHER" id="PTHR19376">
    <property type="entry name" value="DNA-DIRECTED RNA POLYMERASE"/>
    <property type="match status" value="1"/>
</dbReference>
<dbReference type="PANTHER" id="PTHR19376:SF54">
    <property type="entry name" value="DNA-DIRECTED RNA POLYMERASE SUBUNIT BETA"/>
    <property type="match status" value="1"/>
</dbReference>
<dbReference type="Pfam" id="PF04997">
    <property type="entry name" value="RNA_pol_Rpb1_1"/>
    <property type="match status" value="2"/>
</dbReference>
<dbReference type="Pfam" id="PF00623">
    <property type="entry name" value="RNA_pol_Rpb1_2"/>
    <property type="match status" value="2"/>
</dbReference>
<dbReference type="SMART" id="SM00663">
    <property type="entry name" value="RPOLA_N"/>
    <property type="match status" value="1"/>
</dbReference>
<dbReference type="SUPFAM" id="SSF64484">
    <property type="entry name" value="beta and beta-prime subunits of DNA dependent RNA-polymerase"/>
    <property type="match status" value="1"/>
</dbReference>
<organism>
    <name type="scientific">Cycas taitungensis</name>
    <name type="common">Prince sago</name>
    <name type="synonym">Cycas taiwaniana</name>
    <dbReference type="NCBI Taxonomy" id="54799"/>
    <lineage>
        <taxon>Eukaryota</taxon>
        <taxon>Viridiplantae</taxon>
        <taxon>Streptophyta</taxon>
        <taxon>Embryophyta</taxon>
        <taxon>Tracheophyta</taxon>
        <taxon>Spermatophyta</taxon>
        <taxon>Cycadidae</taxon>
        <taxon>Cycadales</taxon>
        <taxon>Cycadaceae</taxon>
        <taxon>Cycas</taxon>
    </lineage>
</organism>
<comment type="function">
    <text evidence="1">DNA-dependent RNA polymerase catalyzes the transcription of DNA into RNA using the four ribonucleoside triphosphates as substrates.</text>
</comment>
<comment type="catalytic activity">
    <reaction evidence="1">
        <text>RNA(n) + a ribonucleoside 5'-triphosphate = RNA(n+1) + diphosphate</text>
        <dbReference type="Rhea" id="RHEA:21248"/>
        <dbReference type="Rhea" id="RHEA-COMP:14527"/>
        <dbReference type="Rhea" id="RHEA-COMP:17342"/>
        <dbReference type="ChEBI" id="CHEBI:33019"/>
        <dbReference type="ChEBI" id="CHEBI:61557"/>
        <dbReference type="ChEBI" id="CHEBI:140395"/>
        <dbReference type="EC" id="2.7.7.6"/>
    </reaction>
</comment>
<comment type="cofactor">
    <cofactor evidence="1">
        <name>Mg(2+)</name>
        <dbReference type="ChEBI" id="CHEBI:18420"/>
    </cofactor>
    <text evidence="1">Binds 1 Mg(2+) ion per subunit.</text>
</comment>
<comment type="cofactor">
    <cofactor evidence="1">
        <name>Zn(2+)</name>
        <dbReference type="ChEBI" id="CHEBI:29105"/>
    </cofactor>
    <text evidence="1">Binds 1 Zn(2+) ion per subunit.</text>
</comment>
<comment type="subunit">
    <text evidence="1">In plastids the minimal PEP RNA polymerase catalytic core is composed of four subunits: alpha, beta, beta', and beta''. When a (nuclear-encoded) sigma factor is associated with the core the holoenzyme is formed, which can initiate transcription.</text>
</comment>
<comment type="subcellular location">
    <subcellularLocation>
        <location evidence="1">Plastid</location>
        <location evidence="1">Chloroplast</location>
    </subcellularLocation>
</comment>
<comment type="similarity">
    <text evidence="1">Belongs to the RNA polymerase beta' chain family. RpoC1 subfamily.</text>
</comment>
<evidence type="ECO:0000255" key="1">
    <source>
        <dbReference type="HAMAP-Rule" id="MF_01323"/>
    </source>
</evidence>
<gene>
    <name evidence="1" type="primary">rpoC1</name>
</gene>
<feature type="chain" id="PRO_0000353486" description="DNA-directed RNA polymerase subunit beta'">
    <location>
        <begin position="1"/>
        <end position="681"/>
    </location>
</feature>
<feature type="binding site" evidence="1">
    <location>
        <position position="69"/>
    </location>
    <ligand>
        <name>Zn(2+)</name>
        <dbReference type="ChEBI" id="CHEBI:29105"/>
    </ligand>
</feature>
<feature type="binding site" evidence="1">
    <location>
        <position position="71"/>
    </location>
    <ligand>
        <name>Zn(2+)</name>
        <dbReference type="ChEBI" id="CHEBI:29105"/>
    </ligand>
</feature>
<feature type="binding site" evidence="1">
    <location>
        <position position="87"/>
    </location>
    <ligand>
        <name>Zn(2+)</name>
        <dbReference type="ChEBI" id="CHEBI:29105"/>
    </ligand>
</feature>
<feature type="binding site" evidence="1">
    <location>
        <position position="90"/>
    </location>
    <ligand>
        <name>Zn(2+)</name>
        <dbReference type="ChEBI" id="CHEBI:29105"/>
    </ligand>
</feature>
<feature type="binding site" evidence="1">
    <location>
        <position position="489"/>
    </location>
    <ligand>
        <name>Mg(2+)</name>
        <dbReference type="ChEBI" id="CHEBI:18420"/>
    </ligand>
</feature>
<feature type="binding site" evidence="1">
    <location>
        <position position="491"/>
    </location>
    <ligand>
        <name>Mg(2+)</name>
        <dbReference type="ChEBI" id="CHEBI:18420"/>
    </ligand>
</feature>
<feature type="binding site" evidence="1">
    <location>
        <position position="493"/>
    </location>
    <ligand>
        <name>Mg(2+)</name>
        <dbReference type="ChEBI" id="CHEBI:18420"/>
    </ligand>
</feature>
<accession>A6H5F8</accession>
<name>RPOC1_CYCTA</name>
<reference key="1">
    <citation type="journal article" date="2007" name="Mol. Biol. Evol.">
        <title>Chloroplast genome (cpDNA) of Cycas taitungensis and 56 cp protein-coding genes of Gnetum parvifolium: insights into cpDNA evolution and phylogeny of extant seed plants.</title>
        <authorList>
            <person name="Wu C.-S."/>
            <person name="Wang Y.-N."/>
            <person name="Liu S.-M."/>
            <person name="Chaw S.-M."/>
        </authorList>
    </citation>
    <scope>NUCLEOTIDE SEQUENCE [LARGE SCALE GENOMIC DNA]</scope>
</reference>
<proteinExistence type="inferred from homology"/>
<sequence>MIDRDKHQQLRIGLASPEQICAWSKRILPNGRIVGQVTKPYTLHYKTNEPEKDGSFCERIFGPIKSGVCACGNSRVIGNEKENSKFCEQCGVEFVDSRIRRYRMGYIELACPVVHVWYSKRLPSYIANLLAKPLKESEGPVYCDLFIARPIANKPTSLRSRGPFKYEIQSWRDIIPHYFSARGFGAFRHREIATGGDAIREQLAGLNLQILMDRSYMEWKRLGKQKSAGNGWGDRKIQRRKDFSVRRMKLAKHFLQTDIEPEWMVLCPLPVLPPELRPIVQLGGGELITSDPNELYRRVIYRNNTLTDLLARSRSTPGGLVICQKKLVQEAVDALLDNGIRGQPMRDSHDRPYKSFSDVIEGKEGRSRENLLGKRVDYSGRSVIVVGPSLPLHQCGLPREIAIELFQAFVIRGLIRRHFAPNLRAAKSIIRDKEPIVWEVLQGVMQGHPVSLNRAPTLHRLGIQAFQPILVEGRAIRLHPLVCGGFNADSDGDQMAVHVPLSLEAQAEARLLMFSHTNLLSPAIGDPISVPTQDMLLGLYILTVGNNQGIYGNRYHPYYSKYKIFSCKKPSFYSYDDALGAHWQKRIELDSPLWFRWGVGLRIITSVDREAPIEVQYESLGIFHEIYEHYRIGKNEVGEILSIYIRTTVGRIRFDREIEEAIQGFSRASEHPNKSLPAIII</sequence>
<protein>
    <recommendedName>
        <fullName evidence="1">DNA-directed RNA polymerase subunit beta'</fullName>
        <ecNumber evidence="1">2.7.7.6</ecNumber>
    </recommendedName>
    <alternativeName>
        <fullName evidence="1">PEP</fullName>
    </alternativeName>
    <alternativeName>
        <fullName evidence="1">Plastid-encoded RNA polymerase subunit beta'</fullName>
        <shortName evidence="1">RNA polymerase subunit beta'</shortName>
    </alternativeName>
</protein>
<geneLocation type="chloroplast"/>
<keyword id="KW-0150">Chloroplast</keyword>
<keyword id="KW-0240">DNA-directed RNA polymerase</keyword>
<keyword id="KW-0460">Magnesium</keyword>
<keyword id="KW-0479">Metal-binding</keyword>
<keyword id="KW-0548">Nucleotidyltransferase</keyword>
<keyword id="KW-0934">Plastid</keyword>
<keyword id="KW-0804">Transcription</keyword>
<keyword id="KW-0808">Transferase</keyword>
<keyword id="KW-0862">Zinc</keyword>